<dbReference type="EMBL" id="FO080104">
    <property type="protein sequence ID" value="CCD61234.1"/>
    <property type="molecule type" value="Genomic_DNA"/>
</dbReference>
<dbReference type="PIR" id="T27989">
    <property type="entry name" value="T27989"/>
</dbReference>
<dbReference type="RefSeq" id="NP_495196.1">
    <property type="nucleotide sequence ID" value="NM_062795.2"/>
</dbReference>
<dbReference type="SMR" id="Q09626"/>
<dbReference type="FunCoup" id="Q09626">
    <property type="interactions" value="46"/>
</dbReference>
<dbReference type="STRING" id="6239.ZK75.1.1"/>
<dbReference type="PaxDb" id="6239-ZK75.1"/>
<dbReference type="EnsemblMetazoa" id="ZK75.1.1">
    <property type="protein sequence ID" value="ZK75.1.1"/>
    <property type="gene ID" value="WBGene00002087"/>
</dbReference>
<dbReference type="GeneID" id="191685"/>
<dbReference type="KEGG" id="cel:CELE_ZK75.1"/>
<dbReference type="UCSC" id="ZK75.1">
    <property type="organism name" value="c. elegans"/>
</dbReference>
<dbReference type="AGR" id="WB:WBGene00002087"/>
<dbReference type="CTD" id="191685"/>
<dbReference type="WormBase" id="ZK75.1">
    <property type="protein sequence ID" value="CE02100"/>
    <property type="gene ID" value="WBGene00002087"/>
    <property type="gene designation" value="ins-4"/>
</dbReference>
<dbReference type="eggNOG" id="ENOG502TIU4">
    <property type="taxonomic scope" value="Eukaryota"/>
</dbReference>
<dbReference type="GeneTree" id="ENSGT00970000196018"/>
<dbReference type="HOGENOM" id="CLU_154797_1_0_1"/>
<dbReference type="InParanoid" id="Q09626"/>
<dbReference type="OMA" id="IATHCCA"/>
<dbReference type="OrthoDB" id="5824650at2759"/>
<dbReference type="PhylomeDB" id="Q09626"/>
<dbReference type="SignaLink" id="Q09626"/>
<dbReference type="PRO" id="PR:Q09626"/>
<dbReference type="Proteomes" id="UP000001940">
    <property type="component" value="Chromosome II"/>
</dbReference>
<dbReference type="Bgee" id="WBGene00002087">
    <property type="expression patterns" value="Expressed in adult organism and 2 other cell types or tissues"/>
</dbReference>
<dbReference type="GO" id="GO:0005576">
    <property type="term" value="C:extracellular region"/>
    <property type="evidence" value="ECO:0007669"/>
    <property type="project" value="UniProtKB-SubCell"/>
</dbReference>
<dbReference type="GO" id="GO:0005179">
    <property type="term" value="F:hormone activity"/>
    <property type="evidence" value="ECO:0007669"/>
    <property type="project" value="UniProtKB-KW"/>
</dbReference>
<dbReference type="GO" id="GO:0040024">
    <property type="term" value="P:dauer larval development"/>
    <property type="evidence" value="ECO:0000316"/>
    <property type="project" value="UniProtKB"/>
</dbReference>
<dbReference type="GO" id="GO:1905910">
    <property type="term" value="P:negative regulation of dauer entry"/>
    <property type="evidence" value="ECO:0000316"/>
    <property type="project" value="UniProtKB"/>
</dbReference>
<dbReference type="GO" id="GO:0008582">
    <property type="term" value="P:regulation of synaptic assembly at neuromuscular junction"/>
    <property type="evidence" value="ECO:0000316"/>
    <property type="project" value="UniProtKB"/>
</dbReference>
<dbReference type="FunFam" id="1.10.100.10:FF:000006">
    <property type="entry name" value="Probable insulin-like peptide beta-type 4"/>
    <property type="match status" value="1"/>
</dbReference>
<dbReference type="Gene3D" id="1.10.100.10">
    <property type="entry name" value="Insulin-like"/>
    <property type="match status" value="1"/>
</dbReference>
<dbReference type="InterPro" id="IPR052335">
    <property type="entry name" value="Insulin-like_regulatory"/>
</dbReference>
<dbReference type="InterPro" id="IPR036438">
    <property type="entry name" value="Insulin-like_sf"/>
</dbReference>
<dbReference type="InterPro" id="IPR022353">
    <property type="entry name" value="Insulin_CS"/>
</dbReference>
<dbReference type="InterPro" id="IPR003235">
    <property type="entry name" value="Nem_insulin-like_b-type"/>
</dbReference>
<dbReference type="PANTHER" id="PTHR33893:SF9">
    <property type="entry name" value="INSULIN RELATED-RELATED"/>
    <property type="match status" value="1"/>
</dbReference>
<dbReference type="PANTHER" id="PTHR33893">
    <property type="entry name" value="INSULIN RELATED-RELATED-RELATED"/>
    <property type="match status" value="1"/>
</dbReference>
<dbReference type="Pfam" id="PF03488">
    <property type="entry name" value="Ins_beta"/>
    <property type="match status" value="1"/>
</dbReference>
<dbReference type="SUPFAM" id="SSF56994">
    <property type="entry name" value="Insulin-like"/>
    <property type="match status" value="1"/>
</dbReference>
<dbReference type="PROSITE" id="PS00262">
    <property type="entry name" value="INSULIN"/>
    <property type="match status" value="1"/>
</dbReference>
<reference key="1">
    <citation type="journal article" date="1998" name="Science">
        <title>Genome sequence of the nematode C. elegans: a platform for investigating biology.</title>
        <authorList>
            <consortium name="The C. elegans sequencing consortium"/>
        </authorList>
    </citation>
    <scope>NUCLEOTIDE SEQUENCE [LARGE SCALE GENOMIC DNA]</scope>
    <source>
        <strain>Bristol N2</strain>
    </source>
</reference>
<reference key="2">
    <citation type="journal article" date="1998" name="Genome Res.">
        <title>New insulin-like proteins with atypical disulfide bond pattern characterized in Caenorhabditis elegans by comparative sequence analysis and homology modeling.</title>
        <authorList>
            <person name="Duret L."/>
            <person name="Guex N."/>
            <person name="Peitsch M.C."/>
            <person name="Bairoch A."/>
        </authorList>
    </citation>
    <scope>SIMILARITY TO INSULIN</scope>
</reference>
<reference key="3">
    <citation type="journal article" date="2013" name="EMBO J.">
        <title>Attenuation of insulin signalling contributes to FSN-1-mediated regulation of synapse development.</title>
        <authorList>
            <person name="Hung W.L."/>
            <person name="Hwang C."/>
            <person name="Gao S."/>
            <person name="Liao E.H."/>
            <person name="Chitturi J."/>
            <person name="Wang Y."/>
            <person name="Li H."/>
            <person name="Stigloher C."/>
            <person name="Bessereau J.L."/>
            <person name="Zhen M."/>
        </authorList>
    </citation>
    <scope>FUNCTION</scope>
    <scope>PROTEOLYTIC CLEAVAGE</scope>
    <scope>MUTAGENESIS OF 50-ARG-ARG-51</scope>
</reference>
<reference key="4">
    <citation type="journal article" date="2014" name="Development">
        <title>A Caenorhabditis elegans developmental decision requires insulin signaling-mediated neuron-intestine communication.</title>
        <authorList>
            <person name="Hung W.L."/>
            <person name="Wang Y."/>
            <person name="Chitturi J."/>
            <person name="Zhen M."/>
        </authorList>
    </citation>
    <scope>FUNCTION</scope>
    <scope>TISSUE SPECIFICITY</scope>
</reference>
<protein>
    <recommendedName>
        <fullName>Probable insulin-like peptide beta-type 1</fullName>
    </recommendedName>
</protein>
<feature type="signal peptide" evidence="1">
    <location>
        <begin position="1"/>
        <end position="19"/>
    </location>
</feature>
<feature type="propeptide" id="PRO_0000016216" description="Removed; by convertase egl-3" evidence="2">
    <location>
        <begin position="20"/>
        <end position="51"/>
    </location>
</feature>
<feature type="chain" id="PRO_0000016217" description="Probable insulin-like peptide beta-type 1">
    <location>
        <begin position="52"/>
        <end position="106"/>
    </location>
</feature>
<feature type="disulfide bond" evidence="1">
    <location>
        <begin position="60"/>
        <end position="89"/>
    </location>
</feature>
<feature type="disulfide bond" evidence="1">
    <location>
        <begin position="72"/>
        <end position="102"/>
    </location>
</feature>
<feature type="disulfide bond" evidence="1">
    <location>
        <begin position="76"/>
        <end position="103"/>
    </location>
</feature>
<feature type="disulfide bond" evidence="1">
    <location>
        <begin position="88"/>
        <end position="93"/>
    </location>
</feature>
<feature type="mutagenesis site" description="Loss of processing by convertase egl-3." evidence="2">
    <original>RR</original>
    <variation>AA</variation>
    <location>
        <begin position="50"/>
        <end position="51"/>
    </location>
</feature>
<accession>Q09626</accession>
<evidence type="ECO:0000255" key="1"/>
<evidence type="ECO:0000269" key="2">
    <source>
    </source>
</evidence>
<evidence type="ECO:0000269" key="3">
    <source>
    </source>
</evidence>
<evidence type="ECO:0000305" key="4"/>
<name>ILB1_CAEEL</name>
<sequence length="106" mass="11997">MFSFFTYFLLSALLLSASCRQPSMDTSKADRILREIEMETELENQLSRARRVPAGEVRACGRRLLLFVWSTCGEPCTPQEDMDIATVCCTTQCTPSYIKQACCPEK</sequence>
<proteinExistence type="evidence at protein level"/>
<comment type="function">
    <text evidence="2 3">Probable insulin-like peptide which negatively regulates synapse development at the neuromuscular junctions (PubMed:23665919). Probably acts as a daf-2/InsR agonist ligand to prevent dauer formation under optimal environmental conditions (PubMed:24671950).</text>
</comment>
<comment type="subcellular location">
    <subcellularLocation>
        <location evidence="4">Secreted</location>
    </subcellularLocation>
</comment>
<comment type="tissue specificity">
    <text evidence="3">Expressed by ASI and ASJ sensory neurons and weakly by ventral cord motor neurons.</text>
</comment>
<comment type="similarity">
    <text evidence="4">Belongs to the insulin family.</text>
</comment>
<organism>
    <name type="scientific">Caenorhabditis elegans</name>
    <dbReference type="NCBI Taxonomy" id="6239"/>
    <lineage>
        <taxon>Eukaryota</taxon>
        <taxon>Metazoa</taxon>
        <taxon>Ecdysozoa</taxon>
        <taxon>Nematoda</taxon>
        <taxon>Chromadorea</taxon>
        <taxon>Rhabditida</taxon>
        <taxon>Rhabditina</taxon>
        <taxon>Rhabditomorpha</taxon>
        <taxon>Rhabditoidea</taxon>
        <taxon>Rhabditidae</taxon>
        <taxon>Peloderinae</taxon>
        <taxon>Caenorhabditis</taxon>
    </lineage>
</organism>
<gene>
    <name type="primary">ins-4</name>
    <name type="ORF">ZK75.1</name>
</gene>
<keyword id="KW-0165">Cleavage on pair of basic residues</keyword>
<keyword id="KW-1015">Disulfide bond</keyword>
<keyword id="KW-0372">Hormone</keyword>
<keyword id="KW-1185">Reference proteome</keyword>
<keyword id="KW-0964">Secreted</keyword>
<keyword id="KW-0732">Signal</keyword>